<organism>
    <name type="scientific">Trifolium subterraneum</name>
    <name type="common">Subterranean clover</name>
    <dbReference type="NCBI Taxonomy" id="3900"/>
    <lineage>
        <taxon>Eukaryota</taxon>
        <taxon>Viridiplantae</taxon>
        <taxon>Streptophyta</taxon>
        <taxon>Embryophyta</taxon>
        <taxon>Tracheophyta</taxon>
        <taxon>Spermatophyta</taxon>
        <taxon>Magnoliopsida</taxon>
        <taxon>eudicotyledons</taxon>
        <taxon>Gunneridae</taxon>
        <taxon>Pentapetalae</taxon>
        <taxon>rosids</taxon>
        <taxon>fabids</taxon>
        <taxon>Fabales</taxon>
        <taxon>Fabaceae</taxon>
        <taxon>Papilionoideae</taxon>
        <taxon>50 kb inversion clade</taxon>
        <taxon>NPAAA clade</taxon>
        <taxon>Hologalegina</taxon>
        <taxon>IRL clade</taxon>
        <taxon>Trifolieae</taxon>
        <taxon>Trifolium</taxon>
    </lineage>
</organism>
<accession>P51084</accession>
<proteinExistence type="inferred from homology"/>
<reference key="1">
    <citation type="journal article" date="1994" name="Gene">
        <title>In Trifolium subterraneum, chalcone synthase is encoded by a multigene family.</title>
        <authorList>
            <person name="Arioli T."/>
            <person name="Howles P.A."/>
            <person name="Weinman J.J."/>
            <person name="Rolfe B.G."/>
        </authorList>
    </citation>
    <scope>NUCLEOTIDE SEQUENCE</scope>
    <source>
        <strain>cv. Karridale</strain>
        <tissue>Leaf</tissue>
        <tissue>Stem</tissue>
    </source>
</reference>
<name>CHS2_TRISU</name>
<protein>
    <recommendedName>
        <fullName>Chalcone synthase 2</fullName>
        <ecNumber>2.3.1.74</ecNumber>
    </recommendedName>
    <alternativeName>
        <fullName>Naringenin-chalcone synthase 2</fullName>
    </alternativeName>
</protein>
<feature type="chain" id="PRO_0000216069" description="Chalcone synthase 2">
    <location>
        <begin position="1"/>
        <end position="389"/>
    </location>
</feature>
<feature type="active site" evidence="1">
    <location>
        <position position="164"/>
    </location>
</feature>
<sequence>MVSVSEIRKAQRAEGPATILAIGTANPANRVEQATYPDFYFKITNSEHKVELKEKFQRMCDKSMIKSRYMYLTEEILKENPSVCEYMAPSLDARQDMVVVEVPRLGKEAAVKAIKEWGQPKSKITHLIFCTTSGVDMPGADYQLTKLLGLRPYVKRYMMYQQGCFAGGTVLRLAKDLAENNKGARVLVVCSEVTAVTFRGPSDTHLDSLVGQALFGDGAAALIVGSDPVPEIEKPIFEMVWTAQTIAPDSEGAIDGHLREAGLTFHLLKDVPGIVSKNIDKALVEAFQPLNISDYNSIFWIAHPGGPAILDQVEQKLALKPEKMKATREVLSEYGNMSSACVLFILDEMRKKSAQNGLKTTGEGLEWGVLFGFGPGLTIETVVLHSVAI</sequence>
<comment type="function">
    <text>The primary product of this enzyme is 4,2',4',6'-tetrahydroxychalcone (also termed naringenin-chalcone or chalcone) which can under specific conditions spontaneously isomerize into naringenin.</text>
</comment>
<comment type="catalytic activity">
    <reaction evidence="1">
        <text>(E)-4-coumaroyl-CoA + 3 malonyl-CoA + 3 H(+) = 2',4,4',6'-tetrahydroxychalcone + 3 CO2 + 4 CoA</text>
        <dbReference type="Rhea" id="RHEA:11128"/>
        <dbReference type="ChEBI" id="CHEBI:15378"/>
        <dbReference type="ChEBI" id="CHEBI:15413"/>
        <dbReference type="ChEBI" id="CHEBI:16526"/>
        <dbReference type="ChEBI" id="CHEBI:57287"/>
        <dbReference type="ChEBI" id="CHEBI:57384"/>
        <dbReference type="ChEBI" id="CHEBI:85008"/>
        <dbReference type="EC" id="2.3.1.74"/>
    </reaction>
</comment>
<comment type="pathway">
    <text>Secondary metabolite biosynthesis; flavonoid biosynthesis.</text>
</comment>
<comment type="similarity">
    <text evidence="2">Belongs to the thiolase-like superfamily. Chalcone/stilbene synthases family.</text>
</comment>
<evidence type="ECO:0000255" key="1">
    <source>
        <dbReference type="PROSITE-ProRule" id="PRU10023"/>
    </source>
</evidence>
<evidence type="ECO:0000305" key="2"/>
<dbReference type="EC" id="2.3.1.74"/>
<dbReference type="EMBL" id="M91194">
    <property type="protein sequence ID" value="AAA18177.1"/>
    <property type="molecule type" value="Unassigned_DNA"/>
</dbReference>
<dbReference type="SMR" id="P51084"/>
<dbReference type="UniPathway" id="UPA00154"/>
<dbReference type="GO" id="GO:0016210">
    <property type="term" value="F:naringenin-chalcone synthase activity"/>
    <property type="evidence" value="ECO:0007669"/>
    <property type="project" value="UniProtKB-EC"/>
</dbReference>
<dbReference type="GO" id="GO:0009813">
    <property type="term" value="P:flavonoid biosynthetic process"/>
    <property type="evidence" value="ECO:0007669"/>
    <property type="project" value="UniProtKB-UniPathway"/>
</dbReference>
<dbReference type="GO" id="GO:0030639">
    <property type="term" value="P:polyketide biosynthetic process"/>
    <property type="evidence" value="ECO:0007669"/>
    <property type="project" value="TreeGrafter"/>
</dbReference>
<dbReference type="CDD" id="cd00831">
    <property type="entry name" value="CHS_like"/>
    <property type="match status" value="1"/>
</dbReference>
<dbReference type="FunFam" id="3.40.47.10:FF:000014">
    <property type="entry name" value="Chalcone synthase 1"/>
    <property type="match status" value="1"/>
</dbReference>
<dbReference type="FunFam" id="3.40.47.10:FF:000025">
    <property type="entry name" value="Chalcone synthase 2"/>
    <property type="match status" value="1"/>
</dbReference>
<dbReference type="Gene3D" id="3.40.47.10">
    <property type="match status" value="2"/>
</dbReference>
<dbReference type="InterPro" id="IPR012328">
    <property type="entry name" value="Chalcone/stilbene_synt_C"/>
</dbReference>
<dbReference type="InterPro" id="IPR001099">
    <property type="entry name" value="Chalcone/stilbene_synt_N"/>
</dbReference>
<dbReference type="InterPro" id="IPR018088">
    <property type="entry name" value="Chalcone/stilbene_synthase_AS"/>
</dbReference>
<dbReference type="InterPro" id="IPR011141">
    <property type="entry name" value="Polyketide_synthase_type-III"/>
</dbReference>
<dbReference type="InterPro" id="IPR016039">
    <property type="entry name" value="Thiolase-like"/>
</dbReference>
<dbReference type="PANTHER" id="PTHR11877:SF62">
    <property type="entry name" value="CHALCONE SYNTHASE 7"/>
    <property type="match status" value="1"/>
</dbReference>
<dbReference type="PANTHER" id="PTHR11877">
    <property type="entry name" value="HYDROXYMETHYLGLUTARYL-COA SYNTHASE"/>
    <property type="match status" value="1"/>
</dbReference>
<dbReference type="Pfam" id="PF02797">
    <property type="entry name" value="Chal_sti_synt_C"/>
    <property type="match status" value="1"/>
</dbReference>
<dbReference type="Pfam" id="PF00195">
    <property type="entry name" value="Chal_sti_synt_N"/>
    <property type="match status" value="1"/>
</dbReference>
<dbReference type="PIRSF" id="PIRSF000451">
    <property type="entry name" value="PKS_III"/>
    <property type="match status" value="1"/>
</dbReference>
<dbReference type="SUPFAM" id="SSF53901">
    <property type="entry name" value="Thiolase-like"/>
    <property type="match status" value="2"/>
</dbReference>
<dbReference type="PROSITE" id="PS00441">
    <property type="entry name" value="CHALCONE_SYNTH"/>
    <property type="match status" value="1"/>
</dbReference>
<keyword id="KW-0012">Acyltransferase</keyword>
<keyword id="KW-0284">Flavonoid biosynthesis</keyword>
<keyword id="KW-0808">Transferase</keyword>
<gene>
    <name type="primary">CHS2</name>
</gene>